<accession>Q72H22</accession>
<organism>
    <name type="scientific">Thermus thermophilus (strain ATCC BAA-163 / DSM 7039 / HB27)</name>
    <dbReference type="NCBI Taxonomy" id="262724"/>
    <lineage>
        <taxon>Bacteria</taxon>
        <taxon>Thermotogati</taxon>
        <taxon>Deinococcota</taxon>
        <taxon>Deinococci</taxon>
        <taxon>Thermales</taxon>
        <taxon>Thermaceae</taxon>
        <taxon>Thermus</taxon>
    </lineage>
</organism>
<comment type="function">
    <text evidence="1">Converts heme B (protoheme IX) to heme O by substitution of the vinyl group on carbon 2 of heme B porphyrin ring with a hydroxyethyl farnesyl side group.</text>
</comment>
<comment type="catalytic activity">
    <reaction>
        <text>heme b + (2E,6E)-farnesyl diphosphate + H2O = Fe(II)-heme o + diphosphate</text>
        <dbReference type="Rhea" id="RHEA:28070"/>
        <dbReference type="ChEBI" id="CHEBI:15377"/>
        <dbReference type="ChEBI" id="CHEBI:33019"/>
        <dbReference type="ChEBI" id="CHEBI:60344"/>
        <dbReference type="ChEBI" id="CHEBI:60530"/>
        <dbReference type="ChEBI" id="CHEBI:175763"/>
        <dbReference type="EC" id="2.5.1.141"/>
    </reaction>
</comment>
<comment type="pathway">
    <text>Porphyrin-containing compound metabolism; heme O biosynthesis; heme O from protoheme: step 1/1.</text>
</comment>
<comment type="subcellular location">
    <subcellularLocation>
        <location evidence="3">Cell inner membrane</location>
        <topology evidence="3">Multi-pass membrane protein</topology>
    </subcellularLocation>
</comment>
<comment type="miscellaneous">
    <text evidence="1">Carbon 2 of the heme B porphyrin ring is defined according to the Fischer nomenclature (By similarity). Protoheme IX farnesyltransferase subfamily.</text>
</comment>
<comment type="similarity">
    <text evidence="3">In the N-terminal section; belongs to the COX15/CtaA family.</text>
</comment>
<comment type="similarity">
    <text evidence="3">In the C-terminal section; belongs to the UbiA prenyltransferase family. Protoheme IX farnesyltransferase subfamily.</text>
</comment>
<dbReference type="EC" id="2.5.1.141"/>
<dbReference type="EMBL" id="AE017221">
    <property type="protein sequence ID" value="AAS82015.1"/>
    <property type="molecule type" value="Genomic_DNA"/>
</dbReference>
<dbReference type="RefSeq" id="WP_011174039.1">
    <property type="nucleotide sequence ID" value="NC_005835.1"/>
</dbReference>
<dbReference type="SMR" id="Q72H22"/>
<dbReference type="KEGG" id="tth:TT_C1673"/>
<dbReference type="eggNOG" id="COG0109">
    <property type="taxonomic scope" value="Bacteria"/>
</dbReference>
<dbReference type="eggNOG" id="COG1612">
    <property type="taxonomic scope" value="Bacteria"/>
</dbReference>
<dbReference type="HOGENOM" id="CLU_030009_0_0_0"/>
<dbReference type="OrthoDB" id="9814417at2"/>
<dbReference type="UniPathway" id="UPA00834">
    <property type="reaction ID" value="UER00712"/>
</dbReference>
<dbReference type="Proteomes" id="UP000000592">
    <property type="component" value="Chromosome"/>
</dbReference>
<dbReference type="GO" id="GO:0005886">
    <property type="term" value="C:plasma membrane"/>
    <property type="evidence" value="ECO:0007669"/>
    <property type="project" value="UniProtKB-SubCell"/>
</dbReference>
<dbReference type="GO" id="GO:0016653">
    <property type="term" value="F:oxidoreductase activity, acting on NAD(P)H, heme protein as acceptor"/>
    <property type="evidence" value="ECO:0007669"/>
    <property type="project" value="InterPro"/>
</dbReference>
<dbReference type="GO" id="GO:0008495">
    <property type="term" value="F:protoheme IX farnesyltransferase activity"/>
    <property type="evidence" value="ECO:0007669"/>
    <property type="project" value="UniProtKB-UniRule"/>
</dbReference>
<dbReference type="GO" id="GO:0006784">
    <property type="term" value="P:heme A biosynthetic process"/>
    <property type="evidence" value="ECO:0007669"/>
    <property type="project" value="InterPro"/>
</dbReference>
<dbReference type="GO" id="GO:0048034">
    <property type="term" value="P:heme O biosynthetic process"/>
    <property type="evidence" value="ECO:0007669"/>
    <property type="project" value="UniProtKB-UniRule"/>
</dbReference>
<dbReference type="CDD" id="cd13957">
    <property type="entry name" value="PT_UbiA_Cox10"/>
    <property type="match status" value="1"/>
</dbReference>
<dbReference type="FunFam" id="1.10.357.140:FF:000001">
    <property type="entry name" value="Protoheme IX farnesyltransferase"/>
    <property type="match status" value="1"/>
</dbReference>
<dbReference type="Gene3D" id="1.10.357.140">
    <property type="entry name" value="UbiA prenyltransferase"/>
    <property type="match status" value="1"/>
</dbReference>
<dbReference type="HAMAP" id="MF_00154">
    <property type="entry name" value="CyoE_CtaB"/>
    <property type="match status" value="1"/>
</dbReference>
<dbReference type="InterPro" id="IPR003780">
    <property type="entry name" value="COX15/CtaA_fam"/>
</dbReference>
<dbReference type="InterPro" id="IPR006369">
    <property type="entry name" value="Protohaem_IX_farnesylTrfase"/>
</dbReference>
<dbReference type="InterPro" id="IPR000537">
    <property type="entry name" value="UbiA_prenyltransferase"/>
</dbReference>
<dbReference type="InterPro" id="IPR044878">
    <property type="entry name" value="UbiA_sf"/>
</dbReference>
<dbReference type="NCBIfam" id="TIGR01473">
    <property type="entry name" value="cyoE_ctaB"/>
    <property type="match status" value="1"/>
</dbReference>
<dbReference type="NCBIfam" id="NF003349">
    <property type="entry name" value="PRK04375.1-2"/>
    <property type="match status" value="1"/>
</dbReference>
<dbReference type="PANTHER" id="PTHR43448:SF7">
    <property type="entry name" value="4-HYDROXYBENZOATE SOLANESYLTRANSFERASE"/>
    <property type="match status" value="1"/>
</dbReference>
<dbReference type="PANTHER" id="PTHR43448">
    <property type="entry name" value="PROTOHEME IX FARNESYLTRANSFERASE, MITOCHONDRIAL"/>
    <property type="match status" value="1"/>
</dbReference>
<dbReference type="Pfam" id="PF02628">
    <property type="entry name" value="COX15-CtaA"/>
    <property type="match status" value="1"/>
</dbReference>
<dbReference type="Pfam" id="PF01040">
    <property type="entry name" value="UbiA"/>
    <property type="match status" value="1"/>
</dbReference>
<reference key="1">
    <citation type="journal article" date="2004" name="Nat. Biotechnol.">
        <title>The genome sequence of the extreme thermophile Thermus thermophilus.</title>
        <authorList>
            <person name="Henne A."/>
            <person name="Brueggemann H."/>
            <person name="Raasch C."/>
            <person name="Wiezer A."/>
            <person name="Hartsch T."/>
            <person name="Liesegang H."/>
            <person name="Johann A."/>
            <person name="Lienard T."/>
            <person name="Gohl O."/>
            <person name="Martinez-Arias R."/>
            <person name="Jacobi C."/>
            <person name="Starkuviene V."/>
            <person name="Schlenczeck S."/>
            <person name="Dencker S."/>
            <person name="Huber R."/>
            <person name="Klenk H.-P."/>
            <person name="Kramer W."/>
            <person name="Merkl R."/>
            <person name="Gottschalk G."/>
            <person name="Fritz H.-J."/>
        </authorList>
    </citation>
    <scope>NUCLEOTIDE SEQUENCE [LARGE SCALE GENOMIC DNA]</scope>
    <source>
        <strain>ATCC BAA-163 / DSM 7039 / HB27</strain>
    </source>
</reference>
<protein>
    <recommendedName>
        <fullName>Protoheme IX farnesyltransferase</fullName>
        <ecNumber>2.5.1.141</ecNumber>
    </recommendedName>
    <alternativeName>
        <fullName>Heme B farnesyltransferase</fullName>
    </alternativeName>
    <alternativeName>
        <fullName>Heme O synthase</fullName>
    </alternativeName>
</protein>
<keyword id="KW-0997">Cell inner membrane</keyword>
<keyword id="KW-1003">Cell membrane</keyword>
<keyword id="KW-0350">Heme biosynthesis</keyword>
<keyword id="KW-0472">Membrane</keyword>
<keyword id="KW-0808">Transferase</keyword>
<keyword id="KW-0812">Transmembrane</keyword>
<keyword id="KW-1133">Transmembrane helix</keyword>
<gene>
    <name type="primary">ctaB</name>
    <name type="ordered locus">TT_C1673</name>
</gene>
<feature type="chain" id="PRO_0000327192" description="Protoheme IX farnesyltransferase">
    <location>
        <begin position="1"/>
        <end position="608"/>
    </location>
</feature>
<feature type="transmembrane region" description="Helical" evidence="2">
    <location>
        <begin position="10"/>
        <end position="30"/>
    </location>
</feature>
<feature type="transmembrane region" description="Helical" evidence="2">
    <location>
        <begin position="67"/>
        <end position="87"/>
    </location>
</feature>
<feature type="transmembrane region" description="Helical" evidence="2">
    <location>
        <begin position="99"/>
        <end position="119"/>
    </location>
</feature>
<feature type="transmembrane region" description="Helical" evidence="2">
    <location>
        <begin position="139"/>
        <end position="159"/>
    </location>
</feature>
<feature type="transmembrane region" description="Helical" evidence="2">
    <location>
        <begin position="167"/>
        <end position="187"/>
    </location>
</feature>
<feature type="transmembrane region" description="Helical" evidence="2">
    <location>
        <begin position="220"/>
        <end position="240"/>
    </location>
</feature>
<feature type="transmembrane region" description="Helical" evidence="2">
    <location>
        <begin position="252"/>
        <end position="272"/>
    </location>
</feature>
<feature type="transmembrane region" description="Helical" evidence="2">
    <location>
        <begin position="277"/>
        <end position="297"/>
    </location>
</feature>
<feature type="transmembrane region" description="Helical" evidence="2">
    <location>
        <begin position="338"/>
        <end position="357"/>
    </location>
</feature>
<feature type="transmembrane region" description="Helical" evidence="2">
    <location>
        <begin position="362"/>
        <end position="384"/>
    </location>
</feature>
<feature type="transmembrane region" description="Helical" evidence="2">
    <location>
        <begin position="411"/>
        <end position="431"/>
    </location>
</feature>
<feature type="transmembrane region" description="Helical" evidence="2">
    <location>
        <begin position="432"/>
        <end position="452"/>
    </location>
</feature>
<feature type="transmembrane region" description="Helical" evidence="2">
    <location>
        <begin position="460"/>
        <end position="480"/>
    </location>
</feature>
<feature type="transmembrane region" description="Helical" evidence="2">
    <location>
        <begin position="488"/>
        <end position="508"/>
    </location>
</feature>
<feature type="transmembrane region" description="Helical" evidence="2">
    <location>
        <begin position="530"/>
        <end position="550"/>
    </location>
</feature>
<feature type="transmembrane region" description="Helical" evidence="2">
    <location>
        <begin position="555"/>
        <end position="575"/>
    </location>
</feature>
<feature type="transmembrane region" description="Helical" evidence="2">
    <location>
        <begin position="584"/>
        <end position="604"/>
    </location>
</feature>
<feature type="region of interest" description="COX15/CtaA">
    <location>
        <begin position="1"/>
        <end position="304"/>
    </location>
</feature>
<feature type="region of interest" description="Protoheme IX prenyltransferase">
    <location>
        <begin position="339"/>
        <end position="606"/>
    </location>
</feature>
<proteinExistence type="inferred from homology"/>
<evidence type="ECO:0000250" key="1"/>
<evidence type="ECO:0000255" key="2"/>
<evidence type="ECO:0000305" key="3"/>
<sequence length="608" mass="65770">MKTPAWSRLAGYAWGVLLWNVLVALFGAYVRATGSGAGCGAHWPTCNGEVIPRAPQVETLIEFTHRATSGLAFLSVLALFLWALRAFPKGHPARFGAGLALFFMVTESLVGASLVLFGWTADNVSRERAVVQMVHLANTYFLLAALALTAWWASGGGPLRLRGQGAVGLALFLGLLALLFLGMSGAVTALGDLLFPVGSTLEALERSLTPGEHFLVRLRVLHPLIAVSVGLYVVFAGYLVAHLRPSPLTRRLAQGLAYLYGAQLLAGLINVALKAPVWMQILHLLLAYAVWLLFVFLATSALERGAKRVELGEGGEAVHRGTGGATWRDYLALTKPRVISLLLFTALFGALIAAKGWPGLGVFLAVALGGYMMAGAANAINMVVDRDIDARMKRTAKRPTVTQRVSSRDALLFAFALAVLGFAVLWWGANLLAATLALMGLIWYVLVYTLYLKRRTWHNIVIGGAAGAFPPLVGWAAVTGELSLFAWYLFALIFFWTPVHFWALALMIQDDYRAVGVPMLPVVLGERATVIQIALYALLTALISLMPLLLGELGLLYLAASLLLNALLLLKSLALYRRPERRTAVSLYKYSMLYLALLFAAMAVDRAV</sequence>
<name>COXX_THET2</name>